<evidence type="ECO:0000250" key="1"/>
<evidence type="ECO:0000255" key="2"/>
<evidence type="ECO:0000305" key="3"/>
<feature type="signal peptide" evidence="2">
    <location>
        <begin position="1"/>
        <end position="20"/>
    </location>
</feature>
<feature type="chain" id="PRO_0000408604" description="Long chronological lifespan protein 2">
    <location>
        <begin position="21"/>
        <end position="120"/>
    </location>
</feature>
<comment type="function">
    <text evidence="1">Probable component of the endoplasmic reticulum-associated degradation (ERAD) pathway.</text>
</comment>
<comment type="similarity">
    <text evidence="3">Belongs to the LCL2 family.</text>
</comment>
<accession>E3QVL2</accession>
<organism>
    <name type="scientific">Colletotrichum graminicola (strain M1.001 / M2 / FGSC 10212)</name>
    <name type="common">Maize anthracnose fungus</name>
    <name type="synonym">Glomerella graminicola</name>
    <dbReference type="NCBI Taxonomy" id="645133"/>
    <lineage>
        <taxon>Eukaryota</taxon>
        <taxon>Fungi</taxon>
        <taxon>Dikarya</taxon>
        <taxon>Ascomycota</taxon>
        <taxon>Pezizomycotina</taxon>
        <taxon>Sordariomycetes</taxon>
        <taxon>Hypocreomycetidae</taxon>
        <taxon>Glomerellales</taxon>
        <taxon>Glomerellaceae</taxon>
        <taxon>Colletotrichum</taxon>
        <taxon>Colletotrichum graminicola species complex</taxon>
    </lineage>
</organism>
<reference key="1">
    <citation type="journal article" date="2012" name="Nat. Genet.">
        <title>Lifestyle transitions in plant pathogenic Colletotrichum fungi deciphered by genome and transcriptome analyses.</title>
        <authorList>
            <person name="O'Connell R.J."/>
            <person name="Thon M.R."/>
            <person name="Hacquard S."/>
            <person name="Amyotte S.G."/>
            <person name="Kleemann J."/>
            <person name="Torres M.F."/>
            <person name="Damm U."/>
            <person name="Buiate E.A."/>
            <person name="Epstein L."/>
            <person name="Alkan N."/>
            <person name="Altmueller J."/>
            <person name="Alvarado-Balderrama L."/>
            <person name="Bauser C.A."/>
            <person name="Becker C."/>
            <person name="Birren B.W."/>
            <person name="Chen Z."/>
            <person name="Choi J."/>
            <person name="Crouch J.A."/>
            <person name="Duvick J.P."/>
            <person name="Farman M.A."/>
            <person name="Gan P."/>
            <person name="Heiman D."/>
            <person name="Henrissat B."/>
            <person name="Howard R.J."/>
            <person name="Kabbage M."/>
            <person name="Koch C."/>
            <person name="Kracher B."/>
            <person name="Kubo Y."/>
            <person name="Law A.D."/>
            <person name="Lebrun M.-H."/>
            <person name="Lee Y.-H."/>
            <person name="Miyara I."/>
            <person name="Moore N."/>
            <person name="Neumann U."/>
            <person name="Nordstroem K."/>
            <person name="Panaccione D.G."/>
            <person name="Panstruga R."/>
            <person name="Place M."/>
            <person name="Proctor R.H."/>
            <person name="Prusky D."/>
            <person name="Rech G."/>
            <person name="Reinhardt R."/>
            <person name="Rollins J.A."/>
            <person name="Rounsley S."/>
            <person name="Schardl C.L."/>
            <person name="Schwartz D.C."/>
            <person name="Shenoy N."/>
            <person name="Shirasu K."/>
            <person name="Sikhakolli U.R."/>
            <person name="Stueber K."/>
            <person name="Sukno S.A."/>
            <person name="Sweigard J.A."/>
            <person name="Takano Y."/>
            <person name="Takahara H."/>
            <person name="Trail F."/>
            <person name="van der Does H.C."/>
            <person name="Voll L.M."/>
            <person name="Will I."/>
            <person name="Young S."/>
            <person name="Zeng Q."/>
            <person name="Zhang J."/>
            <person name="Zhou S."/>
            <person name="Dickman M.B."/>
            <person name="Schulze-Lefert P."/>
            <person name="Ver Loren van Themaat E."/>
            <person name="Ma L.-J."/>
            <person name="Vaillancourt L.J."/>
        </authorList>
    </citation>
    <scope>NUCLEOTIDE SEQUENCE [LARGE SCALE GENOMIC DNA]</scope>
    <source>
        <strain>M1.001 / M2 / FGSC 10212</strain>
    </source>
</reference>
<protein>
    <recommendedName>
        <fullName>Long chronological lifespan protein 2</fullName>
    </recommendedName>
</protein>
<gene>
    <name type="primary">LCL2</name>
    <name type="ORF">GLRG_10044</name>
</gene>
<proteinExistence type="inferred from homology"/>
<keyword id="KW-1185">Reference proteome</keyword>
<keyword id="KW-0732">Signal</keyword>
<name>LCL2_COLGM</name>
<sequence length="120" mass="13375">MRFFASLPLVILALISSAQAQFGFFDQMFGGQQQQQQQPQNVPSDPSQYQQRYDGSYCENYLCPDTLACVHFPHHCPCPWPANQDKFELTEGSSRICVSKGGFAAGEAARKVELARKGLL</sequence>
<dbReference type="EMBL" id="GG697385">
    <property type="protein sequence ID" value="EFQ34900.1"/>
    <property type="molecule type" value="Genomic_DNA"/>
</dbReference>
<dbReference type="RefSeq" id="XP_008098920.1">
    <property type="nucleotide sequence ID" value="XM_008100729.1"/>
</dbReference>
<dbReference type="SMR" id="E3QVL2"/>
<dbReference type="STRING" id="645133.E3QVL2"/>
<dbReference type="EnsemblFungi" id="EFQ34900">
    <property type="protein sequence ID" value="EFQ34900"/>
    <property type="gene ID" value="GLRG_10044"/>
</dbReference>
<dbReference type="GeneID" id="24415409"/>
<dbReference type="VEuPathDB" id="FungiDB:GLRG_10044"/>
<dbReference type="eggNOG" id="ENOG502S416">
    <property type="taxonomic scope" value="Eukaryota"/>
</dbReference>
<dbReference type="HOGENOM" id="CLU_142363_0_0_1"/>
<dbReference type="OrthoDB" id="2234316at2759"/>
<dbReference type="Proteomes" id="UP000008782">
    <property type="component" value="Unassembled WGS sequence"/>
</dbReference>
<dbReference type="GO" id="GO:0036503">
    <property type="term" value="P:ERAD pathway"/>
    <property type="evidence" value="ECO:0007669"/>
    <property type="project" value="TreeGrafter"/>
</dbReference>
<dbReference type="CDD" id="cd23996">
    <property type="entry name" value="LCL2-like"/>
    <property type="match status" value="1"/>
</dbReference>
<dbReference type="InterPro" id="IPR034543">
    <property type="entry name" value="LCL2"/>
</dbReference>
<dbReference type="PANTHER" id="PTHR38425">
    <property type="entry name" value="LONG CHRONOLOGICAL LIFESPAN PROTEIN 2"/>
    <property type="match status" value="1"/>
</dbReference>
<dbReference type="PANTHER" id="PTHR38425:SF1">
    <property type="entry name" value="LONG CHRONOLOGICAL LIFESPAN PROTEIN 2"/>
    <property type="match status" value="1"/>
</dbReference>